<accession>A5FPB5</accession>
<gene>
    <name evidence="1" type="primary">fmt</name>
    <name type="ordered locus">DehaBAV1_1386</name>
</gene>
<feature type="chain" id="PRO_1000077297" description="Methionyl-tRNA formyltransferase">
    <location>
        <begin position="1"/>
        <end position="315"/>
    </location>
</feature>
<feature type="binding site" evidence="1">
    <location>
        <begin position="115"/>
        <end position="118"/>
    </location>
    <ligand>
        <name>(6S)-5,6,7,8-tetrahydrofolate</name>
        <dbReference type="ChEBI" id="CHEBI:57453"/>
    </ligand>
</feature>
<protein>
    <recommendedName>
        <fullName evidence="1">Methionyl-tRNA formyltransferase</fullName>
        <ecNumber evidence="1">2.1.2.9</ecNumber>
    </recommendedName>
</protein>
<dbReference type="EC" id="2.1.2.9" evidence="1"/>
<dbReference type="EMBL" id="CP000688">
    <property type="protein sequence ID" value="ABQ17963.1"/>
    <property type="molecule type" value="Genomic_DNA"/>
</dbReference>
<dbReference type="SMR" id="A5FPB5"/>
<dbReference type="KEGG" id="deb:DehaBAV1_1386"/>
<dbReference type="PATRIC" id="fig|216389.18.peg.1459"/>
<dbReference type="HOGENOM" id="CLU_033347_1_1_0"/>
<dbReference type="GO" id="GO:0005829">
    <property type="term" value="C:cytosol"/>
    <property type="evidence" value="ECO:0007669"/>
    <property type="project" value="TreeGrafter"/>
</dbReference>
<dbReference type="GO" id="GO:0004479">
    <property type="term" value="F:methionyl-tRNA formyltransferase activity"/>
    <property type="evidence" value="ECO:0007669"/>
    <property type="project" value="UniProtKB-UniRule"/>
</dbReference>
<dbReference type="CDD" id="cd08646">
    <property type="entry name" value="FMT_core_Met-tRNA-FMT_N"/>
    <property type="match status" value="1"/>
</dbReference>
<dbReference type="CDD" id="cd08704">
    <property type="entry name" value="Met_tRNA_FMT_C"/>
    <property type="match status" value="1"/>
</dbReference>
<dbReference type="Gene3D" id="3.40.50.12230">
    <property type="match status" value="1"/>
</dbReference>
<dbReference type="HAMAP" id="MF_00182">
    <property type="entry name" value="Formyl_trans"/>
    <property type="match status" value="1"/>
</dbReference>
<dbReference type="InterPro" id="IPR005794">
    <property type="entry name" value="Fmt"/>
</dbReference>
<dbReference type="InterPro" id="IPR005793">
    <property type="entry name" value="Formyl_trans_C"/>
</dbReference>
<dbReference type="InterPro" id="IPR002376">
    <property type="entry name" value="Formyl_transf_N"/>
</dbReference>
<dbReference type="InterPro" id="IPR036477">
    <property type="entry name" value="Formyl_transf_N_sf"/>
</dbReference>
<dbReference type="InterPro" id="IPR011034">
    <property type="entry name" value="Formyl_transferase-like_C_sf"/>
</dbReference>
<dbReference type="InterPro" id="IPR044135">
    <property type="entry name" value="Met-tRNA-FMT_C"/>
</dbReference>
<dbReference type="InterPro" id="IPR041711">
    <property type="entry name" value="Met-tRNA-FMT_N"/>
</dbReference>
<dbReference type="NCBIfam" id="TIGR00460">
    <property type="entry name" value="fmt"/>
    <property type="match status" value="1"/>
</dbReference>
<dbReference type="PANTHER" id="PTHR11138">
    <property type="entry name" value="METHIONYL-TRNA FORMYLTRANSFERASE"/>
    <property type="match status" value="1"/>
</dbReference>
<dbReference type="PANTHER" id="PTHR11138:SF5">
    <property type="entry name" value="METHIONYL-TRNA FORMYLTRANSFERASE, MITOCHONDRIAL"/>
    <property type="match status" value="1"/>
</dbReference>
<dbReference type="Pfam" id="PF02911">
    <property type="entry name" value="Formyl_trans_C"/>
    <property type="match status" value="1"/>
</dbReference>
<dbReference type="Pfam" id="PF00551">
    <property type="entry name" value="Formyl_trans_N"/>
    <property type="match status" value="1"/>
</dbReference>
<dbReference type="SUPFAM" id="SSF50486">
    <property type="entry name" value="FMT C-terminal domain-like"/>
    <property type="match status" value="1"/>
</dbReference>
<dbReference type="SUPFAM" id="SSF53328">
    <property type="entry name" value="Formyltransferase"/>
    <property type="match status" value="1"/>
</dbReference>
<proteinExistence type="inferred from homology"/>
<comment type="function">
    <text evidence="1">Attaches a formyl group to the free amino group of methionyl-tRNA(fMet). The formyl group appears to play a dual role in the initiator identity of N-formylmethionyl-tRNA by promoting its recognition by IF2 and preventing the misappropriation of this tRNA by the elongation apparatus.</text>
</comment>
<comment type="catalytic activity">
    <reaction evidence="1">
        <text>L-methionyl-tRNA(fMet) + (6R)-10-formyltetrahydrofolate = N-formyl-L-methionyl-tRNA(fMet) + (6S)-5,6,7,8-tetrahydrofolate + H(+)</text>
        <dbReference type="Rhea" id="RHEA:24380"/>
        <dbReference type="Rhea" id="RHEA-COMP:9952"/>
        <dbReference type="Rhea" id="RHEA-COMP:9953"/>
        <dbReference type="ChEBI" id="CHEBI:15378"/>
        <dbReference type="ChEBI" id="CHEBI:57453"/>
        <dbReference type="ChEBI" id="CHEBI:78530"/>
        <dbReference type="ChEBI" id="CHEBI:78844"/>
        <dbReference type="ChEBI" id="CHEBI:195366"/>
        <dbReference type="EC" id="2.1.2.9"/>
    </reaction>
</comment>
<comment type="similarity">
    <text evidence="1">Belongs to the Fmt family.</text>
</comment>
<reference key="1">
    <citation type="submission" date="2007-05" db="EMBL/GenBank/DDBJ databases">
        <title>Complete sequence of Dehalococcoides sp. BAV1.</title>
        <authorList>
            <consortium name="US DOE Joint Genome Institute"/>
            <person name="Copeland A."/>
            <person name="Lucas S."/>
            <person name="Lapidus A."/>
            <person name="Barry K."/>
            <person name="Detter J.C."/>
            <person name="Glavina del Rio T."/>
            <person name="Hammon N."/>
            <person name="Israni S."/>
            <person name="Pitluck S."/>
            <person name="Lowry S."/>
            <person name="Clum A."/>
            <person name="Schmutz J."/>
            <person name="Larimer F."/>
            <person name="Land M."/>
            <person name="Hauser L."/>
            <person name="Kyrpides N."/>
            <person name="Kim E."/>
            <person name="Ritalahti K.M."/>
            <person name="Loeffler F."/>
            <person name="Richardson P."/>
        </authorList>
    </citation>
    <scope>NUCLEOTIDE SEQUENCE [LARGE SCALE GENOMIC DNA]</scope>
    <source>
        <strain>ATCC BAA-2100 / JCM 16839 / KCTC 5957 / BAV1</strain>
    </source>
</reference>
<sequence length="315" mass="34393">MAVMNELKIVFMGSPEFALTPLKMLLAEGYDICGVYTQPDRPAGRGRELCPPPVKTLALEHGLAVYQPQSLKKPEEQAFLKELKPDVIVVAAYGLILPQAVLDIPVYGVLNIHPSLLPRYRGATPVAATLLGGDEWAGVSLMKLEAGLDTGPVYSRSMVAIRPEDTTPILADKLAFIGGCMLLELLSQIPSLPEPQVQDNTQASYFGMVTKEMGLINWQTSAVEIERRVRAFFPWPGVFTTFNQKTLKILEAKPRNLGLGLKPSEVRVYEQSRVMVGSASGELEIIRLQLEGKAGCSAADFVRGQRNFDGVNLGV</sequence>
<name>FMT_DEHMB</name>
<keyword id="KW-0648">Protein biosynthesis</keyword>
<keyword id="KW-0808">Transferase</keyword>
<evidence type="ECO:0000255" key="1">
    <source>
        <dbReference type="HAMAP-Rule" id="MF_00182"/>
    </source>
</evidence>
<organism>
    <name type="scientific">Dehalococcoides mccartyi (strain ATCC BAA-2100 / JCM 16839 / KCTC 5957 / BAV1)</name>
    <dbReference type="NCBI Taxonomy" id="216389"/>
    <lineage>
        <taxon>Bacteria</taxon>
        <taxon>Bacillati</taxon>
        <taxon>Chloroflexota</taxon>
        <taxon>Dehalococcoidia</taxon>
        <taxon>Dehalococcoidales</taxon>
        <taxon>Dehalococcoidaceae</taxon>
        <taxon>Dehalococcoides</taxon>
    </lineage>
</organism>